<name>TRUA_ECOSE</name>
<evidence type="ECO:0000255" key="1">
    <source>
        <dbReference type="HAMAP-Rule" id="MF_00171"/>
    </source>
</evidence>
<gene>
    <name evidence="1" type="primary">truA</name>
    <name type="ordered locus">ECSE_2627</name>
</gene>
<accession>B6I4U6</accession>
<keyword id="KW-0413">Isomerase</keyword>
<keyword id="KW-0819">tRNA processing</keyword>
<feature type="chain" id="PRO_1000097741" description="tRNA pseudouridine synthase A">
    <location>
        <begin position="1"/>
        <end position="270"/>
    </location>
</feature>
<feature type="region of interest" description="RNA binding" evidence="1">
    <location>
        <begin position="107"/>
        <end position="111"/>
    </location>
</feature>
<feature type="region of interest" description="Interaction with tRNA" evidence="1">
    <location>
        <begin position="168"/>
        <end position="172"/>
    </location>
</feature>
<feature type="active site" description="Nucleophile" evidence="1">
    <location>
        <position position="60"/>
    </location>
</feature>
<feature type="binding site" evidence="1">
    <location>
        <position position="118"/>
    </location>
    <ligand>
        <name>substrate</name>
    </ligand>
</feature>
<feature type="site" description="Interaction with tRNA; Important for base-flipping" evidence="1">
    <location>
        <position position="58"/>
    </location>
</feature>
<feature type="site" description="Interaction with tRNA" evidence="1">
    <location>
        <position position="78"/>
    </location>
</feature>
<feature type="site" description="Interaction with tRNA" evidence="1">
    <location>
        <position position="110"/>
    </location>
</feature>
<feature type="site" description="Interaction with tRNA" evidence="1">
    <location>
        <position position="126"/>
    </location>
</feature>
<feature type="site" description="Interaction with tRNA" evidence="1">
    <location>
        <position position="139"/>
    </location>
</feature>
<dbReference type="EC" id="5.4.99.12" evidence="1"/>
<dbReference type="EMBL" id="AP009240">
    <property type="protein sequence ID" value="BAG78151.1"/>
    <property type="molecule type" value="Genomic_DNA"/>
</dbReference>
<dbReference type="RefSeq" id="WP_001283581.1">
    <property type="nucleotide sequence ID" value="NC_011415.1"/>
</dbReference>
<dbReference type="SMR" id="B6I4U6"/>
<dbReference type="GeneID" id="75202599"/>
<dbReference type="KEGG" id="ecy:ECSE_2627"/>
<dbReference type="HOGENOM" id="CLU_014673_0_2_6"/>
<dbReference type="Proteomes" id="UP000008199">
    <property type="component" value="Chromosome"/>
</dbReference>
<dbReference type="GO" id="GO:0003723">
    <property type="term" value="F:RNA binding"/>
    <property type="evidence" value="ECO:0007669"/>
    <property type="project" value="InterPro"/>
</dbReference>
<dbReference type="GO" id="GO:0160147">
    <property type="term" value="F:tRNA pseudouridine(38-40) synthase activity"/>
    <property type="evidence" value="ECO:0007669"/>
    <property type="project" value="UniProtKB-EC"/>
</dbReference>
<dbReference type="GO" id="GO:0031119">
    <property type="term" value="P:tRNA pseudouridine synthesis"/>
    <property type="evidence" value="ECO:0007669"/>
    <property type="project" value="UniProtKB-UniRule"/>
</dbReference>
<dbReference type="CDD" id="cd02570">
    <property type="entry name" value="PseudoU_synth_EcTruA"/>
    <property type="match status" value="1"/>
</dbReference>
<dbReference type="FunFam" id="3.30.70.580:FF:000001">
    <property type="entry name" value="tRNA pseudouridine synthase A"/>
    <property type="match status" value="1"/>
</dbReference>
<dbReference type="FunFam" id="3.30.70.660:FF:000001">
    <property type="entry name" value="tRNA pseudouridine synthase A"/>
    <property type="match status" value="1"/>
</dbReference>
<dbReference type="Gene3D" id="3.30.70.660">
    <property type="entry name" value="Pseudouridine synthase I, catalytic domain, C-terminal subdomain"/>
    <property type="match status" value="1"/>
</dbReference>
<dbReference type="Gene3D" id="3.30.70.580">
    <property type="entry name" value="Pseudouridine synthase I, catalytic domain, N-terminal subdomain"/>
    <property type="match status" value="1"/>
</dbReference>
<dbReference type="HAMAP" id="MF_00171">
    <property type="entry name" value="TruA"/>
    <property type="match status" value="1"/>
</dbReference>
<dbReference type="InterPro" id="IPR020103">
    <property type="entry name" value="PsdUridine_synth_cat_dom_sf"/>
</dbReference>
<dbReference type="InterPro" id="IPR001406">
    <property type="entry name" value="PsdUridine_synth_TruA"/>
</dbReference>
<dbReference type="InterPro" id="IPR020097">
    <property type="entry name" value="PsdUridine_synth_TruA_a/b_dom"/>
</dbReference>
<dbReference type="InterPro" id="IPR020095">
    <property type="entry name" value="PsdUridine_synth_TruA_C"/>
</dbReference>
<dbReference type="InterPro" id="IPR020094">
    <property type="entry name" value="TruA/RsuA/RluB/E/F_N"/>
</dbReference>
<dbReference type="NCBIfam" id="TIGR00071">
    <property type="entry name" value="hisT_truA"/>
    <property type="match status" value="1"/>
</dbReference>
<dbReference type="PANTHER" id="PTHR11142">
    <property type="entry name" value="PSEUDOURIDYLATE SYNTHASE"/>
    <property type="match status" value="1"/>
</dbReference>
<dbReference type="PANTHER" id="PTHR11142:SF0">
    <property type="entry name" value="TRNA PSEUDOURIDINE SYNTHASE-LIKE 1"/>
    <property type="match status" value="1"/>
</dbReference>
<dbReference type="Pfam" id="PF01416">
    <property type="entry name" value="PseudoU_synth_1"/>
    <property type="match status" value="2"/>
</dbReference>
<dbReference type="PIRSF" id="PIRSF001430">
    <property type="entry name" value="tRNA_psdUrid_synth"/>
    <property type="match status" value="1"/>
</dbReference>
<dbReference type="SUPFAM" id="SSF55120">
    <property type="entry name" value="Pseudouridine synthase"/>
    <property type="match status" value="1"/>
</dbReference>
<protein>
    <recommendedName>
        <fullName evidence="1">tRNA pseudouridine synthase A</fullName>
        <ecNumber evidence="1">5.4.99.12</ecNumber>
    </recommendedName>
    <alternativeName>
        <fullName evidence="1">tRNA pseudouridine(38-40) synthase</fullName>
    </alternativeName>
    <alternativeName>
        <fullName evidence="1">tRNA pseudouridylate synthase I</fullName>
    </alternativeName>
    <alternativeName>
        <fullName evidence="1">tRNA-uridine isomerase I</fullName>
    </alternativeName>
</protein>
<proteinExistence type="inferred from homology"/>
<organism>
    <name type="scientific">Escherichia coli (strain SE11)</name>
    <dbReference type="NCBI Taxonomy" id="409438"/>
    <lineage>
        <taxon>Bacteria</taxon>
        <taxon>Pseudomonadati</taxon>
        <taxon>Pseudomonadota</taxon>
        <taxon>Gammaproteobacteria</taxon>
        <taxon>Enterobacterales</taxon>
        <taxon>Enterobacteriaceae</taxon>
        <taxon>Escherichia</taxon>
    </lineage>
</organism>
<sequence>MSDQQQLPVYKIALGIEYDGSKYYGWQRQNEVRSVQEKLEKALSQVANEPITVFCAGRTDAGVHGTGQVVHFETTAQRKDAAWTLGVNANLPGDIAVRWVKAVPDDFHARFSATARRYRYIIYNHRLRPAVLSKGVTHFYEPLDAERMHRAAQCLLGENDFTSFRAVQCQSRTPWRNVMHINVTRHGPYVVVDIKANAFVHHMVRNIVGSLMEVGAHNQPESWIAELLAAKDRTLAAATAKAEGLYLVAVDYPDRYDLPKPPMGPLFLAD</sequence>
<reference key="1">
    <citation type="journal article" date="2008" name="DNA Res.">
        <title>Complete genome sequence and comparative analysis of the wild-type commensal Escherichia coli strain SE11 isolated from a healthy adult.</title>
        <authorList>
            <person name="Oshima K."/>
            <person name="Toh H."/>
            <person name="Ogura Y."/>
            <person name="Sasamoto H."/>
            <person name="Morita H."/>
            <person name="Park S.-H."/>
            <person name="Ooka T."/>
            <person name="Iyoda S."/>
            <person name="Taylor T.D."/>
            <person name="Hayashi T."/>
            <person name="Itoh K."/>
            <person name="Hattori M."/>
        </authorList>
    </citation>
    <scope>NUCLEOTIDE SEQUENCE [LARGE SCALE GENOMIC DNA]</scope>
    <source>
        <strain>SE11</strain>
    </source>
</reference>
<comment type="function">
    <text evidence="1">Formation of pseudouridine at positions 38, 39 and 40 in the anticodon stem and loop of transfer RNAs.</text>
</comment>
<comment type="catalytic activity">
    <reaction evidence="1">
        <text>uridine(38/39/40) in tRNA = pseudouridine(38/39/40) in tRNA</text>
        <dbReference type="Rhea" id="RHEA:22376"/>
        <dbReference type="Rhea" id="RHEA-COMP:10085"/>
        <dbReference type="Rhea" id="RHEA-COMP:10087"/>
        <dbReference type="ChEBI" id="CHEBI:65314"/>
        <dbReference type="ChEBI" id="CHEBI:65315"/>
        <dbReference type="EC" id="5.4.99.12"/>
    </reaction>
</comment>
<comment type="subunit">
    <text evidence="1">Homodimer.</text>
</comment>
<comment type="similarity">
    <text evidence="1">Belongs to the tRNA pseudouridine synthase TruA family.</text>
</comment>